<name>CYSH_GEOSW</name>
<gene>
    <name evidence="1" type="primary">cysH</name>
    <name type="ordered locus">GWCH70_0413</name>
</gene>
<evidence type="ECO:0000255" key="1">
    <source>
        <dbReference type="HAMAP-Rule" id="MF_00063"/>
    </source>
</evidence>
<organism>
    <name type="scientific">Geobacillus sp. (strain WCH70)</name>
    <dbReference type="NCBI Taxonomy" id="471223"/>
    <lineage>
        <taxon>Bacteria</taxon>
        <taxon>Bacillati</taxon>
        <taxon>Bacillota</taxon>
        <taxon>Bacilli</taxon>
        <taxon>Bacillales</taxon>
        <taxon>Anoxybacillaceae</taxon>
        <taxon>Geobacillus</taxon>
    </lineage>
</organism>
<protein>
    <recommendedName>
        <fullName evidence="1">Adenosine 5'-phosphosulfate reductase</fullName>
        <shortName evidence="1">APS reductase</shortName>
        <ecNumber evidence="1">1.8.4.10</ecNumber>
    </recommendedName>
    <alternativeName>
        <fullName evidence="1">5'-adenylylsulfate reductase</fullName>
    </alternativeName>
    <alternativeName>
        <fullName evidence="1">Thioredoxin-dependent 5'-adenylylsulfate reductase</fullName>
    </alternativeName>
</protein>
<dbReference type="EC" id="1.8.4.10" evidence="1"/>
<dbReference type="EMBL" id="CP001638">
    <property type="protein sequence ID" value="ACS23333.1"/>
    <property type="molecule type" value="Genomic_DNA"/>
</dbReference>
<dbReference type="SMR" id="C5D5A7"/>
<dbReference type="STRING" id="471223.GWCH70_0413"/>
<dbReference type="KEGG" id="gwc:GWCH70_0413"/>
<dbReference type="eggNOG" id="COG0175">
    <property type="taxonomic scope" value="Bacteria"/>
</dbReference>
<dbReference type="HOGENOM" id="CLU_044089_2_1_9"/>
<dbReference type="OrthoDB" id="9772604at2"/>
<dbReference type="GO" id="GO:0005737">
    <property type="term" value="C:cytoplasm"/>
    <property type="evidence" value="ECO:0007669"/>
    <property type="project" value="UniProtKB-SubCell"/>
</dbReference>
<dbReference type="GO" id="GO:0051539">
    <property type="term" value="F:4 iron, 4 sulfur cluster binding"/>
    <property type="evidence" value="ECO:0007669"/>
    <property type="project" value="UniProtKB-UniRule"/>
</dbReference>
<dbReference type="GO" id="GO:0043866">
    <property type="term" value="F:adenylyl-sulfate reductase (thioredoxin) activity"/>
    <property type="evidence" value="ECO:0007669"/>
    <property type="project" value="UniProtKB-EC"/>
</dbReference>
<dbReference type="GO" id="GO:0046872">
    <property type="term" value="F:metal ion binding"/>
    <property type="evidence" value="ECO:0007669"/>
    <property type="project" value="UniProtKB-KW"/>
</dbReference>
<dbReference type="GO" id="GO:0004604">
    <property type="term" value="F:phosphoadenylyl-sulfate reductase (thioredoxin) activity"/>
    <property type="evidence" value="ECO:0007669"/>
    <property type="project" value="UniProtKB-UniRule"/>
</dbReference>
<dbReference type="GO" id="GO:0019344">
    <property type="term" value="P:cysteine biosynthetic process"/>
    <property type="evidence" value="ECO:0007669"/>
    <property type="project" value="InterPro"/>
</dbReference>
<dbReference type="GO" id="GO:0070814">
    <property type="term" value="P:hydrogen sulfide biosynthetic process"/>
    <property type="evidence" value="ECO:0007669"/>
    <property type="project" value="UniProtKB-UniRule"/>
</dbReference>
<dbReference type="GO" id="GO:0019379">
    <property type="term" value="P:sulfate assimilation, phosphoadenylyl sulfate reduction by phosphoadenylyl-sulfate reductase (thioredoxin)"/>
    <property type="evidence" value="ECO:0007669"/>
    <property type="project" value="UniProtKB-UniRule"/>
</dbReference>
<dbReference type="CDD" id="cd23945">
    <property type="entry name" value="PAPS_reductase"/>
    <property type="match status" value="1"/>
</dbReference>
<dbReference type="FunFam" id="3.40.50.620:FF:000095">
    <property type="entry name" value="Phosphoadenosine phosphosulfate reductase"/>
    <property type="match status" value="1"/>
</dbReference>
<dbReference type="Gene3D" id="3.40.50.620">
    <property type="entry name" value="HUPs"/>
    <property type="match status" value="1"/>
</dbReference>
<dbReference type="HAMAP" id="MF_00063">
    <property type="entry name" value="CysH"/>
    <property type="match status" value="1"/>
</dbReference>
<dbReference type="InterPro" id="IPR011798">
    <property type="entry name" value="APS_reductase"/>
</dbReference>
<dbReference type="InterPro" id="IPR004511">
    <property type="entry name" value="PAPS/APS_Rdtase"/>
</dbReference>
<dbReference type="InterPro" id="IPR002500">
    <property type="entry name" value="PAPS_reduct_dom"/>
</dbReference>
<dbReference type="InterPro" id="IPR014729">
    <property type="entry name" value="Rossmann-like_a/b/a_fold"/>
</dbReference>
<dbReference type="NCBIfam" id="TIGR02055">
    <property type="entry name" value="APS_reductase"/>
    <property type="match status" value="1"/>
</dbReference>
<dbReference type="NCBIfam" id="TIGR00434">
    <property type="entry name" value="cysH"/>
    <property type="match status" value="1"/>
</dbReference>
<dbReference type="NCBIfam" id="NF002537">
    <property type="entry name" value="PRK02090.1"/>
    <property type="match status" value="1"/>
</dbReference>
<dbReference type="PANTHER" id="PTHR46509">
    <property type="entry name" value="PHOSPHOADENOSINE PHOSPHOSULFATE REDUCTASE"/>
    <property type="match status" value="1"/>
</dbReference>
<dbReference type="PANTHER" id="PTHR46509:SF1">
    <property type="entry name" value="PHOSPHOADENOSINE PHOSPHOSULFATE REDUCTASE"/>
    <property type="match status" value="1"/>
</dbReference>
<dbReference type="Pfam" id="PF01507">
    <property type="entry name" value="PAPS_reduct"/>
    <property type="match status" value="1"/>
</dbReference>
<dbReference type="PIRSF" id="PIRSF000857">
    <property type="entry name" value="PAPS_reductase"/>
    <property type="match status" value="1"/>
</dbReference>
<dbReference type="SUPFAM" id="SSF52402">
    <property type="entry name" value="Adenine nucleotide alpha hydrolases-like"/>
    <property type="match status" value="1"/>
</dbReference>
<reference key="1">
    <citation type="submission" date="2009-06" db="EMBL/GenBank/DDBJ databases">
        <title>Complete sequence of chromosome of Geopacillus sp. WCH70.</title>
        <authorList>
            <consortium name="US DOE Joint Genome Institute"/>
            <person name="Lucas S."/>
            <person name="Copeland A."/>
            <person name="Lapidus A."/>
            <person name="Glavina del Rio T."/>
            <person name="Dalin E."/>
            <person name="Tice H."/>
            <person name="Bruce D."/>
            <person name="Goodwin L."/>
            <person name="Pitluck S."/>
            <person name="Chertkov O."/>
            <person name="Brettin T."/>
            <person name="Detter J.C."/>
            <person name="Han C."/>
            <person name="Larimer F."/>
            <person name="Land M."/>
            <person name="Hauser L."/>
            <person name="Kyrpides N."/>
            <person name="Mikhailova N."/>
            <person name="Brumm P."/>
            <person name="Mead D.A."/>
            <person name="Richardson P."/>
        </authorList>
    </citation>
    <scope>NUCLEOTIDE SEQUENCE [LARGE SCALE GENOMIC DNA]</scope>
    <source>
        <strain>WCH70</strain>
    </source>
</reference>
<accession>C5D5A7</accession>
<proteinExistence type="inferred from homology"/>
<keyword id="KW-0963">Cytoplasm</keyword>
<keyword id="KW-0408">Iron</keyword>
<keyword id="KW-0411">Iron-sulfur</keyword>
<keyword id="KW-0479">Metal-binding</keyword>
<keyword id="KW-0560">Oxidoreductase</keyword>
<sequence length="235" mass="27291">MLTYQTWEAEEKPSFPHDNETKGALDVLTWAFRQYKDDIVYACSFGVEGIVLIDLISQVKPDAEIVFLDTGLHFRETYKTIEKVKEKYPSLRIVMKKPSLSLEEQAQQLGDELWKHNPNKCCELRKVIPLREALTGITAWISGLRREQSPTRSHVEYINKDDKFKSIKICPLIHWTWKDVWNYVYKRRLPYNVLHDRGYPSIGCEPCTSPALDPNDLRSGRWVGHGKTECGLHIS</sequence>
<comment type="function">
    <text evidence="1">Catalyzes the formation of sulfite from adenosine 5'-phosphosulfate (APS) using thioredoxin as an electron donor.</text>
</comment>
<comment type="catalytic activity">
    <reaction evidence="1">
        <text>[thioredoxin]-disulfide + sulfite + AMP + 2 H(+) = adenosine 5'-phosphosulfate + [thioredoxin]-dithiol</text>
        <dbReference type="Rhea" id="RHEA:21976"/>
        <dbReference type="Rhea" id="RHEA-COMP:10698"/>
        <dbReference type="Rhea" id="RHEA-COMP:10700"/>
        <dbReference type="ChEBI" id="CHEBI:15378"/>
        <dbReference type="ChEBI" id="CHEBI:17359"/>
        <dbReference type="ChEBI" id="CHEBI:29950"/>
        <dbReference type="ChEBI" id="CHEBI:50058"/>
        <dbReference type="ChEBI" id="CHEBI:58243"/>
        <dbReference type="ChEBI" id="CHEBI:456215"/>
        <dbReference type="EC" id="1.8.4.10"/>
    </reaction>
</comment>
<comment type="cofactor">
    <cofactor evidence="1">
        <name>[4Fe-4S] cluster</name>
        <dbReference type="ChEBI" id="CHEBI:49883"/>
    </cofactor>
    <text evidence="1">Binds 1 [4Fe-4S] cluster per subunit.</text>
</comment>
<comment type="pathway">
    <text evidence="1">Sulfur metabolism; hydrogen sulfide biosynthesis; sulfite from sulfate.</text>
</comment>
<comment type="subcellular location">
    <subcellularLocation>
        <location evidence="1">Cytoplasm</location>
    </subcellularLocation>
</comment>
<comment type="similarity">
    <text evidence="1">Belongs to the PAPS reductase family. CysH subfamily.</text>
</comment>
<feature type="chain" id="PRO_1000202396" description="Adenosine 5'-phosphosulfate reductase">
    <location>
        <begin position="1"/>
        <end position="235"/>
    </location>
</feature>
<feature type="active site" description="Nucleophile; cysteine thiosulfonate intermediate" evidence="1">
    <location>
        <position position="230"/>
    </location>
</feature>
<feature type="binding site" evidence="1">
    <location>
        <position position="121"/>
    </location>
    <ligand>
        <name>[4Fe-4S] cluster</name>
        <dbReference type="ChEBI" id="CHEBI:49883"/>
    </ligand>
</feature>
<feature type="binding site" evidence="1">
    <location>
        <position position="122"/>
    </location>
    <ligand>
        <name>[4Fe-4S] cluster</name>
        <dbReference type="ChEBI" id="CHEBI:49883"/>
    </ligand>
</feature>
<feature type="binding site" evidence="1">
    <location>
        <position position="204"/>
    </location>
    <ligand>
        <name>[4Fe-4S] cluster</name>
        <dbReference type="ChEBI" id="CHEBI:49883"/>
    </ligand>
</feature>
<feature type="binding site" evidence="1">
    <location>
        <position position="207"/>
    </location>
    <ligand>
        <name>[4Fe-4S] cluster</name>
        <dbReference type="ChEBI" id="CHEBI:49883"/>
    </ligand>
</feature>